<sequence>MDRLYHPAPSRTDCADAAVLRVRGGIVGAATQSDRVAEETPVALEYNGISHATMLASPADLEDYALGFSLTEGIVERPADVRGIEIVPQFNGIVVQVEISSACAARLKTRRRAMAGRTGCGLCGVETLPEVLRQVPTVADAAPVPLTAVLHGMRAMRGSQALHDITGATHAAAWADAEGRVQLVREDVGRHNALDKLVGALARQAIDPRSGMVLVSSRASFEMVQKCAAAGIGILAAVSAPTALAIRVAQNTNVALLGFVRNADAAIYSHPERLRLRP</sequence>
<reference key="1">
    <citation type="journal article" date="2008" name="BMC Genomics">
        <title>The missing link: Bordetella petrii is endowed with both the metabolic versatility of environmental bacteria and virulence traits of pathogenic Bordetellae.</title>
        <authorList>
            <person name="Gross R."/>
            <person name="Guzman C.A."/>
            <person name="Sebaihia M."/>
            <person name="Martin dos Santos V.A.P."/>
            <person name="Pieper D.H."/>
            <person name="Koebnik R."/>
            <person name="Lechner M."/>
            <person name="Bartels D."/>
            <person name="Buhrmester J."/>
            <person name="Choudhuri J.V."/>
            <person name="Ebensen T."/>
            <person name="Gaigalat L."/>
            <person name="Herrmann S."/>
            <person name="Khachane A.N."/>
            <person name="Larisch C."/>
            <person name="Link S."/>
            <person name="Linke B."/>
            <person name="Meyer F."/>
            <person name="Mormann S."/>
            <person name="Nakunst D."/>
            <person name="Rueckert C."/>
            <person name="Schneiker-Bekel S."/>
            <person name="Schulze K."/>
            <person name="Voerholter F.-J."/>
            <person name="Yevsa T."/>
            <person name="Engle J.T."/>
            <person name="Goldman W.E."/>
            <person name="Puehler A."/>
            <person name="Goebel U.B."/>
            <person name="Goesmann A."/>
            <person name="Bloecker H."/>
            <person name="Kaiser O."/>
            <person name="Martinez-Arias R."/>
        </authorList>
    </citation>
    <scope>NUCLEOTIDE SEQUENCE [LARGE SCALE GENOMIC DNA]</scope>
    <source>
        <strain>ATCC BAA-461 / DSM 12804 / CCUG 43448</strain>
    </source>
</reference>
<organism>
    <name type="scientific">Bordetella petrii (strain ATCC BAA-461 / DSM 12804 / CCUG 43448)</name>
    <dbReference type="NCBI Taxonomy" id="340100"/>
    <lineage>
        <taxon>Bacteria</taxon>
        <taxon>Pseudomonadati</taxon>
        <taxon>Pseudomonadota</taxon>
        <taxon>Betaproteobacteria</taxon>
        <taxon>Burkholderiales</taxon>
        <taxon>Alcaligenaceae</taxon>
        <taxon>Bordetella</taxon>
    </lineage>
</organism>
<gene>
    <name evidence="1" type="primary">fdhD</name>
    <name type="ordered locus">Bpet3686</name>
</gene>
<comment type="function">
    <text evidence="1">Required for formate dehydrogenase (FDH) activity. Acts as a sulfur carrier protein that transfers sulfur from IscS to the molybdenum cofactor prior to its insertion into FDH.</text>
</comment>
<comment type="subcellular location">
    <subcellularLocation>
        <location evidence="1">Cytoplasm</location>
    </subcellularLocation>
</comment>
<comment type="similarity">
    <text evidence="1">Belongs to the FdhD family.</text>
</comment>
<keyword id="KW-0963">Cytoplasm</keyword>
<keyword id="KW-0501">Molybdenum cofactor biosynthesis</keyword>
<feature type="chain" id="PRO_1000098779" description="Sulfur carrier protein FdhD">
    <location>
        <begin position="1"/>
        <end position="278"/>
    </location>
</feature>
<feature type="active site" description="Cysteine persulfide intermediate" evidence="1">
    <location>
        <position position="120"/>
    </location>
</feature>
<accession>A9I097</accession>
<evidence type="ECO:0000255" key="1">
    <source>
        <dbReference type="HAMAP-Rule" id="MF_00187"/>
    </source>
</evidence>
<dbReference type="EMBL" id="AM902716">
    <property type="protein sequence ID" value="CAP44029.1"/>
    <property type="molecule type" value="Genomic_DNA"/>
</dbReference>
<dbReference type="SMR" id="A9I097"/>
<dbReference type="STRING" id="94624.Bpet3686"/>
<dbReference type="KEGG" id="bpt:Bpet3686"/>
<dbReference type="eggNOG" id="COG1526">
    <property type="taxonomic scope" value="Bacteria"/>
</dbReference>
<dbReference type="Proteomes" id="UP000001225">
    <property type="component" value="Chromosome"/>
</dbReference>
<dbReference type="GO" id="GO:0005737">
    <property type="term" value="C:cytoplasm"/>
    <property type="evidence" value="ECO:0007669"/>
    <property type="project" value="UniProtKB-SubCell"/>
</dbReference>
<dbReference type="GO" id="GO:0097163">
    <property type="term" value="F:sulfur carrier activity"/>
    <property type="evidence" value="ECO:0007669"/>
    <property type="project" value="UniProtKB-UniRule"/>
</dbReference>
<dbReference type="GO" id="GO:0016783">
    <property type="term" value="F:sulfurtransferase activity"/>
    <property type="evidence" value="ECO:0007669"/>
    <property type="project" value="InterPro"/>
</dbReference>
<dbReference type="GO" id="GO:0006777">
    <property type="term" value="P:Mo-molybdopterin cofactor biosynthetic process"/>
    <property type="evidence" value="ECO:0007669"/>
    <property type="project" value="UniProtKB-UniRule"/>
</dbReference>
<dbReference type="Gene3D" id="3.10.20.10">
    <property type="match status" value="1"/>
</dbReference>
<dbReference type="Gene3D" id="3.40.140.10">
    <property type="entry name" value="Cytidine Deaminase, domain 2"/>
    <property type="match status" value="1"/>
</dbReference>
<dbReference type="HAMAP" id="MF_00187">
    <property type="entry name" value="FdhD"/>
    <property type="match status" value="1"/>
</dbReference>
<dbReference type="InterPro" id="IPR016193">
    <property type="entry name" value="Cytidine_deaminase-like"/>
</dbReference>
<dbReference type="InterPro" id="IPR003786">
    <property type="entry name" value="FdhD"/>
</dbReference>
<dbReference type="NCBIfam" id="TIGR00129">
    <property type="entry name" value="fdhD_narQ"/>
    <property type="match status" value="1"/>
</dbReference>
<dbReference type="PANTHER" id="PTHR30592">
    <property type="entry name" value="FORMATE DEHYDROGENASE"/>
    <property type="match status" value="1"/>
</dbReference>
<dbReference type="PANTHER" id="PTHR30592:SF1">
    <property type="entry name" value="SULFUR CARRIER PROTEIN FDHD"/>
    <property type="match status" value="1"/>
</dbReference>
<dbReference type="Pfam" id="PF02634">
    <property type="entry name" value="FdhD-NarQ"/>
    <property type="match status" value="1"/>
</dbReference>
<dbReference type="PIRSF" id="PIRSF015626">
    <property type="entry name" value="FdhD"/>
    <property type="match status" value="1"/>
</dbReference>
<dbReference type="SUPFAM" id="SSF53927">
    <property type="entry name" value="Cytidine deaminase-like"/>
    <property type="match status" value="1"/>
</dbReference>
<protein>
    <recommendedName>
        <fullName evidence="1">Sulfur carrier protein FdhD</fullName>
    </recommendedName>
</protein>
<proteinExistence type="inferred from homology"/>
<name>FDHD_BORPD</name>